<gene>
    <name evidence="1" type="primary">recO</name>
    <name type="ordered locus">BT_0788</name>
</gene>
<evidence type="ECO:0000255" key="1">
    <source>
        <dbReference type="HAMAP-Rule" id="MF_00201"/>
    </source>
</evidence>
<comment type="function">
    <text evidence="1">Involved in DNA repair and RecF pathway recombination.</text>
</comment>
<comment type="similarity">
    <text evidence="1">Belongs to the RecO family.</text>
</comment>
<reference key="1">
    <citation type="journal article" date="2007" name="Nat. Genet.">
        <title>Genomic analysis of Bartonella identifies type IV secretion systems as host adaptability factors.</title>
        <authorList>
            <person name="Saenz H.L."/>
            <person name="Engel P."/>
            <person name="Stoeckli M.C."/>
            <person name="Lanz C."/>
            <person name="Raddatz G."/>
            <person name="Vayssier-Taussat M."/>
            <person name="Birtles R."/>
            <person name="Schuster S.C."/>
            <person name="Dehio C."/>
        </authorList>
    </citation>
    <scope>NUCLEOTIDE SEQUENCE [LARGE SCALE GENOMIC DNA]</scope>
    <source>
        <strain>CIP 105476 / IBS 506</strain>
    </source>
</reference>
<protein>
    <recommendedName>
        <fullName evidence="1">DNA repair protein RecO</fullName>
    </recommendedName>
    <alternativeName>
        <fullName evidence="1">Recombination protein O</fullName>
    </alternativeName>
</protein>
<organism>
    <name type="scientific">Bartonella tribocorum (strain CIP 105476 / IBS 506)</name>
    <dbReference type="NCBI Taxonomy" id="382640"/>
    <lineage>
        <taxon>Bacteria</taxon>
        <taxon>Pseudomonadati</taxon>
        <taxon>Pseudomonadota</taxon>
        <taxon>Alphaproteobacteria</taxon>
        <taxon>Hyphomicrobiales</taxon>
        <taxon>Bartonellaceae</taxon>
        <taxon>Bartonella</taxon>
    </lineage>
</organism>
<proteinExistence type="inferred from homology"/>
<feature type="chain" id="PRO_1000077724" description="DNA repair protein RecO">
    <location>
        <begin position="1"/>
        <end position="248"/>
    </location>
</feature>
<dbReference type="EMBL" id="AM260525">
    <property type="protein sequence ID" value="CAK01203.1"/>
    <property type="molecule type" value="Genomic_DNA"/>
</dbReference>
<dbReference type="RefSeq" id="WP_012231316.1">
    <property type="nucleotide sequence ID" value="NC_010161.1"/>
</dbReference>
<dbReference type="SMR" id="A9IRN6"/>
<dbReference type="KEGG" id="btr:BT_0788"/>
<dbReference type="eggNOG" id="COG1381">
    <property type="taxonomic scope" value="Bacteria"/>
</dbReference>
<dbReference type="HOGENOM" id="CLU_086029_0_0_5"/>
<dbReference type="Proteomes" id="UP000001592">
    <property type="component" value="Chromosome"/>
</dbReference>
<dbReference type="GO" id="GO:0043590">
    <property type="term" value="C:bacterial nucleoid"/>
    <property type="evidence" value="ECO:0007669"/>
    <property type="project" value="TreeGrafter"/>
</dbReference>
<dbReference type="GO" id="GO:0006310">
    <property type="term" value="P:DNA recombination"/>
    <property type="evidence" value="ECO:0007669"/>
    <property type="project" value="UniProtKB-UniRule"/>
</dbReference>
<dbReference type="GO" id="GO:0006302">
    <property type="term" value="P:double-strand break repair"/>
    <property type="evidence" value="ECO:0007669"/>
    <property type="project" value="TreeGrafter"/>
</dbReference>
<dbReference type="Gene3D" id="2.40.50.140">
    <property type="entry name" value="Nucleic acid-binding proteins"/>
    <property type="match status" value="1"/>
</dbReference>
<dbReference type="Gene3D" id="1.20.1440.120">
    <property type="entry name" value="Recombination protein O, C-terminal domain"/>
    <property type="match status" value="1"/>
</dbReference>
<dbReference type="HAMAP" id="MF_00201">
    <property type="entry name" value="RecO"/>
    <property type="match status" value="1"/>
</dbReference>
<dbReference type="InterPro" id="IPR037278">
    <property type="entry name" value="ARFGAP/RecO"/>
</dbReference>
<dbReference type="InterPro" id="IPR022572">
    <property type="entry name" value="DNA_rep/recomb_RecO_N"/>
</dbReference>
<dbReference type="InterPro" id="IPR012340">
    <property type="entry name" value="NA-bd_OB-fold"/>
</dbReference>
<dbReference type="InterPro" id="IPR003717">
    <property type="entry name" value="RecO"/>
</dbReference>
<dbReference type="InterPro" id="IPR042242">
    <property type="entry name" value="RecO_C"/>
</dbReference>
<dbReference type="NCBIfam" id="TIGR00613">
    <property type="entry name" value="reco"/>
    <property type="match status" value="1"/>
</dbReference>
<dbReference type="PANTHER" id="PTHR33991">
    <property type="entry name" value="DNA REPAIR PROTEIN RECO"/>
    <property type="match status" value="1"/>
</dbReference>
<dbReference type="PANTHER" id="PTHR33991:SF1">
    <property type="entry name" value="DNA REPAIR PROTEIN RECO"/>
    <property type="match status" value="1"/>
</dbReference>
<dbReference type="Pfam" id="PF02565">
    <property type="entry name" value="RecO_C"/>
    <property type="match status" value="1"/>
</dbReference>
<dbReference type="Pfam" id="PF11967">
    <property type="entry name" value="RecO_N"/>
    <property type="match status" value="1"/>
</dbReference>
<dbReference type="SUPFAM" id="SSF57863">
    <property type="entry name" value="ArfGap/RecO-like zinc finger"/>
    <property type="match status" value="1"/>
</dbReference>
<dbReference type="SUPFAM" id="SSF50249">
    <property type="entry name" value="Nucleic acid-binding proteins"/>
    <property type="match status" value="1"/>
</dbReference>
<keyword id="KW-0227">DNA damage</keyword>
<keyword id="KW-0233">DNA recombination</keyword>
<keyword id="KW-0234">DNA repair</keyword>
<name>RECO_BART1</name>
<accession>A9IRN6</accession>
<sequence length="248" mass="28873">MKWKEQAVILGVRQYGETSVILEIITRERGRYMGVVKGGRSRRMAALLQPGNFVEAEWSARLEEHLGLFRLEALDFHAARLICLPEALYALQLIAFHLRLLPERDPHPVLYDILHLFMQNFDEPFVNAELLVRFEMRLLEELGFGLDLSCCAATGRKQKLYYVSPKSGRAVCEEAGEPWKKKLLILPQFLVQRATRPADFRDIINGFNLTSFFLMRYVWEPRDIKQPSVRTNLIQLFERRFGIQAFIC</sequence>